<gene>
    <name evidence="1" type="primary">rnpA</name>
    <name type="ordered locus">CKO_00050</name>
</gene>
<proteinExistence type="inferred from homology"/>
<keyword id="KW-0255">Endonuclease</keyword>
<keyword id="KW-0378">Hydrolase</keyword>
<keyword id="KW-0540">Nuclease</keyword>
<keyword id="KW-1185">Reference proteome</keyword>
<keyword id="KW-0694">RNA-binding</keyword>
<keyword id="KW-0819">tRNA processing</keyword>
<feature type="chain" id="PRO_1000021393" description="Ribonuclease P protein component">
    <location>
        <begin position="1"/>
        <end position="119"/>
    </location>
</feature>
<organism>
    <name type="scientific">Citrobacter koseri (strain ATCC BAA-895 / CDC 4225-83 / SGSC4696)</name>
    <dbReference type="NCBI Taxonomy" id="290338"/>
    <lineage>
        <taxon>Bacteria</taxon>
        <taxon>Pseudomonadati</taxon>
        <taxon>Pseudomonadota</taxon>
        <taxon>Gammaproteobacteria</taxon>
        <taxon>Enterobacterales</taxon>
        <taxon>Enterobacteriaceae</taxon>
        <taxon>Citrobacter</taxon>
    </lineage>
</organism>
<dbReference type="EC" id="3.1.26.5" evidence="1"/>
<dbReference type="EMBL" id="CP000822">
    <property type="protein sequence ID" value="ABV11229.1"/>
    <property type="molecule type" value="Genomic_DNA"/>
</dbReference>
<dbReference type="RefSeq" id="WP_012000809.1">
    <property type="nucleotide sequence ID" value="NC_009792.1"/>
</dbReference>
<dbReference type="BMRB" id="A8ACL6"/>
<dbReference type="SMR" id="A8ACL6"/>
<dbReference type="STRING" id="290338.CKO_00050"/>
<dbReference type="GeneID" id="45134355"/>
<dbReference type="KEGG" id="cko:CKO_00050"/>
<dbReference type="HOGENOM" id="CLU_117179_11_0_6"/>
<dbReference type="OrthoDB" id="9796422at2"/>
<dbReference type="Proteomes" id="UP000008148">
    <property type="component" value="Chromosome"/>
</dbReference>
<dbReference type="GO" id="GO:0030677">
    <property type="term" value="C:ribonuclease P complex"/>
    <property type="evidence" value="ECO:0007669"/>
    <property type="project" value="TreeGrafter"/>
</dbReference>
<dbReference type="GO" id="GO:0042781">
    <property type="term" value="F:3'-tRNA processing endoribonuclease activity"/>
    <property type="evidence" value="ECO:0007669"/>
    <property type="project" value="TreeGrafter"/>
</dbReference>
<dbReference type="GO" id="GO:0004526">
    <property type="term" value="F:ribonuclease P activity"/>
    <property type="evidence" value="ECO:0007669"/>
    <property type="project" value="UniProtKB-UniRule"/>
</dbReference>
<dbReference type="GO" id="GO:0000049">
    <property type="term" value="F:tRNA binding"/>
    <property type="evidence" value="ECO:0007669"/>
    <property type="project" value="UniProtKB-UniRule"/>
</dbReference>
<dbReference type="GO" id="GO:0001682">
    <property type="term" value="P:tRNA 5'-leader removal"/>
    <property type="evidence" value="ECO:0007669"/>
    <property type="project" value="UniProtKB-UniRule"/>
</dbReference>
<dbReference type="FunFam" id="3.30.230.10:FF:000016">
    <property type="entry name" value="Ribonuclease P protein component"/>
    <property type="match status" value="1"/>
</dbReference>
<dbReference type="Gene3D" id="3.30.230.10">
    <property type="match status" value="1"/>
</dbReference>
<dbReference type="HAMAP" id="MF_00227">
    <property type="entry name" value="RNase_P"/>
    <property type="match status" value="1"/>
</dbReference>
<dbReference type="InterPro" id="IPR020568">
    <property type="entry name" value="Ribosomal_Su5_D2-typ_SF"/>
</dbReference>
<dbReference type="InterPro" id="IPR014721">
    <property type="entry name" value="Ribsml_uS5_D2-typ_fold_subgr"/>
</dbReference>
<dbReference type="InterPro" id="IPR000100">
    <property type="entry name" value="RNase_P"/>
</dbReference>
<dbReference type="InterPro" id="IPR020539">
    <property type="entry name" value="RNase_P_CS"/>
</dbReference>
<dbReference type="NCBIfam" id="TIGR00188">
    <property type="entry name" value="rnpA"/>
    <property type="match status" value="1"/>
</dbReference>
<dbReference type="PANTHER" id="PTHR33992">
    <property type="entry name" value="RIBONUCLEASE P PROTEIN COMPONENT"/>
    <property type="match status" value="1"/>
</dbReference>
<dbReference type="PANTHER" id="PTHR33992:SF1">
    <property type="entry name" value="RIBONUCLEASE P PROTEIN COMPONENT"/>
    <property type="match status" value="1"/>
</dbReference>
<dbReference type="Pfam" id="PF00825">
    <property type="entry name" value="Ribonuclease_P"/>
    <property type="match status" value="1"/>
</dbReference>
<dbReference type="SUPFAM" id="SSF54211">
    <property type="entry name" value="Ribosomal protein S5 domain 2-like"/>
    <property type="match status" value="1"/>
</dbReference>
<dbReference type="PROSITE" id="PS00648">
    <property type="entry name" value="RIBONUCLEASE_P"/>
    <property type="match status" value="1"/>
</dbReference>
<reference key="1">
    <citation type="submission" date="2007-08" db="EMBL/GenBank/DDBJ databases">
        <authorList>
            <consortium name="The Citrobacter koseri Genome Sequencing Project"/>
            <person name="McClelland M."/>
            <person name="Sanderson E.K."/>
            <person name="Porwollik S."/>
            <person name="Spieth J."/>
            <person name="Clifton W.S."/>
            <person name="Latreille P."/>
            <person name="Courtney L."/>
            <person name="Wang C."/>
            <person name="Pepin K."/>
            <person name="Bhonagiri V."/>
            <person name="Nash W."/>
            <person name="Johnson M."/>
            <person name="Thiruvilangam P."/>
            <person name="Wilson R."/>
        </authorList>
    </citation>
    <scope>NUCLEOTIDE SEQUENCE [LARGE SCALE GENOMIC DNA]</scope>
    <source>
        <strain>ATCC BAA-895 / CDC 4225-83 / SGSC4696</strain>
    </source>
</reference>
<sequence length="119" mass="13798">MVKLAFPRELRLLTPSHFTFVFQQPQRAGTPQITILGRLNSLGHPRIGLTVAKKNVRRAHERNRIKRLTRESFRLRQHELPAMDFVVVAKKGVADLDNRALSEALEKLWRRHCRLARGS</sequence>
<name>RNPA_CITK8</name>
<protein>
    <recommendedName>
        <fullName evidence="1">Ribonuclease P protein component</fullName>
        <shortName evidence="1">RNase P protein</shortName>
        <shortName evidence="1">RNaseP protein</shortName>
        <ecNumber evidence="1">3.1.26.5</ecNumber>
    </recommendedName>
    <alternativeName>
        <fullName evidence="1">Protein C5</fullName>
    </alternativeName>
</protein>
<comment type="function">
    <text evidence="1">RNaseP catalyzes the removal of the 5'-leader sequence from pre-tRNA to produce the mature 5'-terminus. It can also cleave other RNA substrates such as 4.5S RNA. The protein component plays an auxiliary but essential role in vivo by binding to the 5'-leader sequence and broadening the substrate specificity of the ribozyme.</text>
</comment>
<comment type="catalytic activity">
    <reaction evidence="1">
        <text>Endonucleolytic cleavage of RNA, removing 5'-extranucleotides from tRNA precursor.</text>
        <dbReference type="EC" id="3.1.26.5"/>
    </reaction>
</comment>
<comment type="subunit">
    <text evidence="1">Consists of a catalytic RNA component (M1 or rnpB) and a protein subunit.</text>
</comment>
<comment type="similarity">
    <text evidence="1">Belongs to the RnpA family.</text>
</comment>
<accession>A8ACL6</accession>
<evidence type="ECO:0000255" key="1">
    <source>
        <dbReference type="HAMAP-Rule" id="MF_00227"/>
    </source>
</evidence>